<sequence>MHNGSPIIRRKSTRIYVGKVPIGDGAPIAVQSMTNTKTTDVDATVAQIKALERVGVDIVRVSIPTMDAAEAFKLIKQQSTVPLVADIHFDYRIALKVAEYGVDCLRINPGNIGNESRIREVVACARDYNIPIRIGINGGSLEKDIQEKYGEPTPEALLESAMRHVDILDRLNFDQFKVSVKASDVFLAVNSYRLLAKQINNPLHLGITEAGGARSGSVKSAIGLGLLLSEGIGDTLRISLAADPVEEVKVGFDILKSLRIRARGINFIACPTCSRQEFDVIGTVNALEQRLEDLITPMDVSIIGCVVNGPGEALVSTIGVTGARNHSGFYEDGVRQKERFDNKAMIDQLEAKIRAKASILDANNRIVINQLDDNK</sequence>
<keyword id="KW-0004">4Fe-4S</keyword>
<keyword id="KW-0408">Iron</keyword>
<keyword id="KW-0411">Iron-sulfur</keyword>
<keyword id="KW-0414">Isoprene biosynthesis</keyword>
<keyword id="KW-0479">Metal-binding</keyword>
<keyword id="KW-0560">Oxidoreductase</keyword>
<evidence type="ECO:0000255" key="1">
    <source>
        <dbReference type="HAMAP-Rule" id="MF_00159"/>
    </source>
</evidence>
<gene>
    <name evidence="1" type="primary">ispG</name>
    <name type="ordered locus">YPTS_2950</name>
</gene>
<feature type="chain" id="PRO_1000097197" description="4-hydroxy-3-methylbut-2-en-1-yl diphosphate synthase (flavodoxin)">
    <location>
        <begin position="1"/>
        <end position="375"/>
    </location>
</feature>
<feature type="binding site" evidence="1">
    <location>
        <position position="270"/>
    </location>
    <ligand>
        <name>[4Fe-4S] cluster</name>
        <dbReference type="ChEBI" id="CHEBI:49883"/>
    </ligand>
</feature>
<feature type="binding site" evidence="1">
    <location>
        <position position="273"/>
    </location>
    <ligand>
        <name>[4Fe-4S] cluster</name>
        <dbReference type="ChEBI" id="CHEBI:49883"/>
    </ligand>
</feature>
<feature type="binding site" evidence="1">
    <location>
        <position position="305"/>
    </location>
    <ligand>
        <name>[4Fe-4S] cluster</name>
        <dbReference type="ChEBI" id="CHEBI:49883"/>
    </ligand>
</feature>
<feature type="binding site" evidence="1">
    <location>
        <position position="312"/>
    </location>
    <ligand>
        <name>[4Fe-4S] cluster</name>
        <dbReference type="ChEBI" id="CHEBI:49883"/>
    </ligand>
</feature>
<accession>B2K9Q0</accession>
<dbReference type="EC" id="1.17.7.3" evidence="1"/>
<dbReference type="EMBL" id="CP001048">
    <property type="protein sequence ID" value="ACC89907.1"/>
    <property type="molecule type" value="Genomic_DNA"/>
</dbReference>
<dbReference type="RefSeq" id="WP_002209817.1">
    <property type="nucleotide sequence ID" value="NZ_CP009780.1"/>
</dbReference>
<dbReference type="SMR" id="B2K9Q0"/>
<dbReference type="GeneID" id="57975837"/>
<dbReference type="KEGG" id="ypb:YPTS_2950"/>
<dbReference type="PATRIC" id="fig|502801.10.peg.2380"/>
<dbReference type="UniPathway" id="UPA00056">
    <property type="reaction ID" value="UER00096"/>
</dbReference>
<dbReference type="GO" id="GO:0051539">
    <property type="term" value="F:4 iron, 4 sulfur cluster binding"/>
    <property type="evidence" value="ECO:0007669"/>
    <property type="project" value="UniProtKB-UniRule"/>
</dbReference>
<dbReference type="GO" id="GO:0046429">
    <property type="term" value="F:4-hydroxy-3-methylbut-2-en-1-yl diphosphate synthase activity (ferredoxin)"/>
    <property type="evidence" value="ECO:0007669"/>
    <property type="project" value="UniProtKB-UniRule"/>
</dbReference>
<dbReference type="GO" id="GO:0141197">
    <property type="term" value="F:4-hydroxy-3-methylbut-2-enyl-diphosphate synthase activity (flavodoxin)"/>
    <property type="evidence" value="ECO:0007669"/>
    <property type="project" value="UniProtKB-EC"/>
</dbReference>
<dbReference type="GO" id="GO:0005506">
    <property type="term" value="F:iron ion binding"/>
    <property type="evidence" value="ECO:0007669"/>
    <property type="project" value="InterPro"/>
</dbReference>
<dbReference type="GO" id="GO:0019288">
    <property type="term" value="P:isopentenyl diphosphate biosynthetic process, methylerythritol 4-phosphate pathway"/>
    <property type="evidence" value="ECO:0007669"/>
    <property type="project" value="UniProtKB-UniRule"/>
</dbReference>
<dbReference type="GO" id="GO:0016114">
    <property type="term" value="P:terpenoid biosynthetic process"/>
    <property type="evidence" value="ECO:0007669"/>
    <property type="project" value="InterPro"/>
</dbReference>
<dbReference type="FunFam" id="3.20.20.20:FF:000001">
    <property type="entry name" value="4-hydroxy-3-methylbut-2-en-1-yl diphosphate synthase (flavodoxin)"/>
    <property type="match status" value="1"/>
</dbReference>
<dbReference type="FunFam" id="3.30.413.10:FF:000002">
    <property type="entry name" value="4-hydroxy-3-methylbut-2-en-1-yl diphosphate synthase (flavodoxin)"/>
    <property type="match status" value="1"/>
</dbReference>
<dbReference type="Gene3D" id="3.20.20.20">
    <property type="entry name" value="Dihydropteroate synthase-like"/>
    <property type="match status" value="1"/>
</dbReference>
<dbReference type="Gene3D" id="3.30.413.10">
    <property type="entry name" value="Sulfite Reductase Hemoprotein, domain 1"/>
    <property type="match status" value="1"/>
</dbReference>
<dbReference type="HAMAP" id="MF_00159">
    <property type="entry name" value="IspG"/>
    <property type="match status" value="1"/>
</dbReference>
<dbReference type="InterPro" id="IPR011005">
    <property type="entry name" value="Dihydropteroate_synth-like_sf"/>
</dbReference>
<dbReference type="InterPro" id="IPR036849">
    <property type="entry name" value="Enolase-like_C_sf"/>
</dbReference>
<dbReference type="InterPro" id="IPR016425">
    <property type="entry name" value="IspG_bac"/>
</dbReference>
<dbReference type="InterPro" id="IPR004588">
    <property type="entry name" value="IspG_bac-typ"/>
</dbReference>
<dbReference type="InterPro" id="IPR045854">
    <property type="entry name" value="NO2/SO3_Rdtase_4Fe4S_sf"/>
</dbReference>
<dbReference type="NCBIfam" id="TIGR00612">
    <property type="entry name" value="ispG_gcpE"/>
    <property type="match status" value="1"/>
</dbReference>
<dbReference type="NCBIfam" id="NF001540">
    <property type="entry name" value="PRK00366.1"/>
    <property type="match status" value="1"/>
</dbReference>
<dbReference type="PANTHER" id="PTHR30454">
    <property type="entry name" value="4-HYDROXY-3-METHYLBUT-2-EN-1-YL DIPHOSPHATE SYNTHASE"/>
    <property type="match status" value="1"/>
</dbReference>
<dbReference type="PANTHER" id="PTHR30454:SF0">
    <property type="entry name" value="4-HYDROXY-3-METHYLBUT-2-EN-1-YL DIPHOSPHATE SYNTHASE (FERREDOXIN), CHLOROPLASTIC"/>
    <property type="match status" value="1"/>
</dbReference>
<dbReference type="Pfam" id="PF04551">
    <property type="entry name" value="GcpE"/>
    <property type="match status" value="1"/>
</dbReference>
<dbReference type="PIRSF" id="PIRSF004640">
    <property type="entry name" value="IspG"/>
    <property type="match status" value="1"/>
</dbReference>
<dbReference type="SUPFAM" id="SSF51604">
    <property type="entry name" value="Enolase C-terminal domain-like"/>
    <property type="match status" value="1"/>
</dbReference>
<dbReference type="SUPFAM" id="SSF56014">
    <property type="entry name" value="Nitrite and sulphite reductase 4Fe-4S domain-like"/>
    <property type="match status" value="1"/>
</dbReference>
<protein>
    <recommendedName>
        <fullName evidence="1">4-hydroxy-3-methylbut-2-en-1-yl diphosphate synthase (flavodoxin)</fullName>
        <ecNumber evidence="1">1.17.7.3</ecNumber>
    </recommendedName>
    <alternativeName>
        <fullName evidence="1">1-hydroxy-2-methyl-2-(E)-butenyl 4-diphosphate synthase</fullName>
    </alternativeName>
</protein>
<reference key="1">
    <citation type="submission" date="2008-04" db="EMBL/GenBank/DDBJ databases">
        <title>Complete sequence of Yersinia pseudotuberculosis PB1/+.</title>
        <authorList>
            <person name="Copeland A."/>
            <person name="Lucas S."/>
            <person name="Lapidus A."/>
            <person name="Glavina del Rio T."/>
            <person name="Dalin E."/>
            <person name="Tice H."/>
            <person name="Bruce D."/>
            <person name="Goodwin L."/>
            <person name="Pitluck S."/>
            <person name="Munk A.C."/>
            <person name="Brettin T."/>
            <person name="Detter J.C."/>
            <person name="Han C."/>
            <person name="Tapia R."/>
            <person name="Schmutz J."/>
            <person name="Larimer F."/>
            <person name="Land M."/>
            <person name="Hauser L."/>
            <person name="Challacombe J.F."/>
            <person name="Green L."/>
            <person name="Lindler L.E."/>
            <person name="Nikolich M.P."/>
            <person name="Richardson P."/>
        </authorList>
    </citation>
    <scope>NUCLEOTIDE SEQUENCE [LARGE SCALE GENOMIC DNA]</scope>
    <source>
        <strain>PB1/+</strain>
    </source>
</reference>
<comment type="function">
    <text evidence="1">Converts 2C-methyl-D-erythritol 2,4-cyclodiphosphate (ME-2,4cPP) into 1-hydroxy-2-methyl-2-(E)-butenyl 4-diphosphate.</text>
</comment>
<comment type="catalytic activity">
    <reaction evidence="1">
        <text>(2E)-4-hydroxy-3-methylbut-2-enyl diphosphate + oxidized [flavodoxin] + H2O + 2 H(+) = 2-C-methyl-D-erythritol 2,4-cyclic diphosphate + reduced [flavodoxin]</text>
        <dbReference type="Rhea" id="RHEA:43604"/>
        <dbReference type="Rhea" id="RHEA-COMP:10622"/>
        <dbReference type="Rhea" id="RHEA-COMP:10623"/>
        <dbReference type="ChEBI" id="CHEBI:15377"/>
        <dbReference type="ChEBI" id="CHEBI:15378"/>
        <dbReference type="ChEBI" id="CHEBI:57618"/>
        <dbReference type="ChEBI" id="CHEBI:58210"/>
        <dbReference type="ChEBI" id="CHEBI:58483"/>
        <dbReference type="ChEBI" id="CHEBI:128753"/>
        <dbReference type="EC" id="1.17.7.3"/>
    </reaction>
</comment>
<comment type="cofactor">
    <cofactor evidence="1">
        <name>[4Fe-4S] cluster</name>
        <dbReference type="ChEBI" id="CHEBI:49883"/>
    </cofactor>
    <text evidence="1">Binds 1 [4Fe-4S] cluster.</text>
</comment>
<comment type="pathway">
    <text evidence="1">Isoprenoid biosynthesis; isopentenyl diphosphate biosynthesis via DXP pathway; isopentenyl diphosphate from 1-deoxy-D-xylulose 5-phosphate: step 5/6.</text>
</comment>
<comment type="similarity">
    <text evidence="1">Belongs to the IspG family.</text>
</comment>
<name>ISPG_YERPB</name>
<proteinExistence type="inferred from homology"/>
<organism>
    <name type="scientific">Yersinia pseudotuberculosis serotype IB (strain PB1/+)</name>
    <dbReference type="NCBI Taxonomy" id="502801"/>
    <lineage>
        <taxon>Bacteria</taxon>
        <taxon>Pseudomonadati</taxon>
        <taxon>Pseudomonadota</taxon>
        <taxon>Gammaproteobacteria</taxon>
        <taxon>Enterobacterales</taxon>
        <taxon>Yersiniaceae</taxon>
        <taxon>Yersinia</taxon>
    </lineage>
</organism>